<gene>
    <name type="primary">ESAG4C</name>
</gene>
<name>CYAA_TRYEQ</name>
<proteinExistence type="inferred from homology"/>
<comment type="function">
    <text>Could act as a receptor for an unknown ligand.</text>
</comment>
<comment type="catalytic activity">
    <reaction>
        <text>ATP = 3',5'-cyclic AMP + diphosphate</text>
        <dbReference type="Rhea" id="RHEA:15389"/>
        <dbReference type="ChEBI" id="CHEBI:30616"/>
        <dbReference type="ChEBI" id="CHEBI:33019"/>
        <dbReference type="ChEBI" id="CHEBI:58165"/>
        <dbReference type="EC" id="4.6.1.1"/>
    </reaction>
</comment>
<comment type="cofactor">
    <cofactor evidence="1">
        <name>Mg(2+)</name>
        <dbReference type="ChEBI" id="CHEBI:18420"/>
    </cofactor>
    <text evidence="1">Binds 1 Mg(2+) ion per subunit.</text>
</comment>
<comment type="subcellular location">
    <subcellularLocation>
        <location evidence="1">Cell membrane</location>
        <topology evidence="1">Multi-pass membrane protein</topology>
    </subcellularLocation>
</comment>
<comment type="similarity">
    <text evidence="5">Belongs to the adenylyl cyclase class-3 family.</text>
</comment>
<feature type="chain" id="PRO_0000195741" description="Receptor-type adenylate cyclase">
    <location>
        <begin position="1" status="less than"/>
        <end position="469"/>
    </location>
</feature>
<feature type="topological domain" description="Extracellular" evidence="3">
    <location>
        <begin position="1" status="less than"/>
        <end position="59"/>
    </location>
</feature>
<feature type="transmembrane region" description="Helical" evidence="3">
    <location>
        <begin position="60"/>
        <end position="80"/>
    </location>
</feature>
<feature type="topological domain" description="Cytoplasmic" evidence="3">
    <location>
        <begin position="81"/>
        <end position="469"/>
    </location>
</feature>
<feature type="domain" description="Guanylate cyclase" evidence="4">
    <location>
        <begin position="103"/>
        <end position="257"/>
    </location>
</feature>
<feature type="binding site" evidence="2">
    <location>
        <position position="108"/>
    </location>
    <ligand>
        <name>Mg(2+)</name>
        <dbReference type="ChEBI" id="CHEBI:18420"/>
    </ligand>
</feature>
<feature type="binding site" evidence="2">
    <location>
        <position position="151"/>
    </location>
    <ligand>
        <name>Mg(2+)</name>
        <dbReference type="ChEBI" id="CHEBI:18420"/>
    </ligand>
</feature>
<feature type="glycosylation site" description="N-linked (GlcNAc...) asparagine" evidence="3">
    <location>
        <position position="31"/>
    </location>
</feature>
<feature type="non-terminal residue">
    <location>
        <position position="1"/>
    </location>
</feature>
<keyword id="KW-0067">ATP-binding</keyword>
<keyword id="KW-0115">cAMP biosynthesis</keyword>
<keyword id="KW-1003">Cell membrane</keyword>
<keyword id="KW-0325">Glycoprotein</keyword>
<keyword id="KW-0456">Lyase</keyword>
<keyword id="KW-0460">Magnesium</keyword>
<keyword id="KW-0472">Membrane</keyword>
<keyword id="KW-0479">Metal-binding</keyword>
<keyword id="KW-0547">Nucleotide-binding</keyword>
<keyword id="KW-0675">Receptor</keyword>
<keyword id="KW-0812">Transmembrane</keyword>
<keyword id="KW-1133">Transmembrane helix</keyword>
<sequence>VDTAEKLSKNGCASNYGATQISVWSMARALNASIPPLTNPMTPSMTFRNSNAGRISGVALVGVIIGGALALFLVVALGVVPYFFLHNTRDNNLAPKELTDPVTLIFTDIESSTALWAAHPELMPDAVATHHRLIRSLIGRYGCYEVKTVGDSFMIASKSPFAAVQLAQELQLCFLHHDWGTNAIDESYQQLEQQRAEEDAKYTPPTARLDLKVYSRLWNGLRVRVGIHTGLCDIRRDEVTKGYDYYGRTSNMAARTESVGNGGQVLMTTAAYMSLSAEEREQIDVTALGDVPLRGVAKPVEMYQLNAVPGRTFAGLRLEHELLNDDEDQTTTSCSDHSSSRTDLSVAAQTIAASLQSLLGTFTPAQRQKALIPFCERWRVPLPQKVGNVWDNDGCQEAIRRVAAKVGRVMDFGTRKASSSVTSLERGGSLFSAGGATVATVASSSNFSCVDGRCGTVQLIDLENDSTTS</sequence>
<accession>P26338</accession>
<organism>
    <name type="scientific">Trypanosoma equiperdum</name>
    <dbReference type="NCBI Taxonomy" id="5694"/>
    <lineage>
        <taxon>Eukaryota</taxon>
        <taxon>Discoba</taxon>
        <taxon>Euglenozoa</taxon>
        <taxon>Kinetoplastea</taxon>
        <taxon>Metakinetoplastina</taxon>
        <taxon>Trypanosomatida</taxon>
        <taxon>Trypanosomatidae</taxon>
        <taxon>Trypanosoma</taxon>
    </lineage>
</organism>
<evidence type="ECO:0000250" key="1"/>
<evidence type="ECO:0000250" key="2">
    <source>
        <dbReference type="UniProtKB" id="Q99280"/>
    </source>
</evidence>
<evidence type="ECO:0000255" key="3"/>
<evidence type="ECO:0000255" key="4">
    <source>
        <dbReference type="PROSITE-ProRule" id="PRU00099"/>
    </source>
</evidence>
<evidence type="ECO:0000305" key="5"/>
<dbReference type="EC" id="4.6.1.1"/>
<dbReference type="EMBL" id="X59386">
    <property type="protein sequence ID" value="CAA42029.1"/>
    <property type="molecule type" value="Genomic_DNA"/>
</dbReference>
<dbReference type="PIR" id="S16359">
    <property type="entry name" value="S16359"/>
</dbReference>
<dbReference type="SMR" id="P26338"/>
<dbReference type="GlyCosmos" id="P26338">
    <property type="glycosylation" value="1 site, No reported glycans"/>
</dbReference>
<dbReference type="VEuPathDB" id="TriTrypDB:TEOVI_000145600"/>
<dbReference type="GO" id="GO:0005886">
    <property type="term" value="C:plasma membrane"/>
    <property type="evidence" value="ECO:0007669"/>
    <property type="project" value="UniProtKB-SubCell"/>
</dbReference>
<dbReference type="GO" id="GO:0004016">
    <property type="term" value="F:adenylate cyclase activity"/>
    <property type="evidence" value="ECO:0007669"/>
    <property type="project" value="UniProtKB-EC"/>
</dbReference>
<dbReference type="GO" id="GO:0005524">
    <property type="term" value="F:ATP binding"/>
    <property type="evidence" value="ECO:0007669"/>
    <property type="project" value="UniProtKB-KW"/>
</dbReference>
<dbReference type="GO" id="GO:0046872">
    <property type="term" value="F:metal ion binding"/>
    <property type="evidence" value="ECO:0007669"/>
    <property type="project" value="UniProtKB-KW"/>
</dbReference>
<dbReference type="GO" id="GO:0006171">
    <property type="term" value="P:cAMP biosynthetic process"/>
    <property type="evidence" value="ECO:0007669"/>
    <property type="project" value="UniProtKB-KW"/>
</dbReference>
<dbReference type="GO" id="GO:0035556">
    <property type="term" value="P:intracellular signal transduction"/>
    <property type="evidence" value="ECO:0007669"/>
    <property type="project" value="InterPro"/>
</dbReference>
<dbReference type="CDD" id="cd07556">
    <property type="entry name" value="Nucleotidyl_cyc_III"/>
    <property type="match status" value="1"/>
</dbReference>
<dbReference type="FunFam" id="3.30.70.1230:FF:000022">
    <property type="entry name" value="Receptor-type adenylate cyclase GRESAG 4, putative"/>
    <property type="match status" value="1"/>
</dbReference>
<dbReference type="Gene3D" id="3.30.70.1230">
    <property type="entry name" value="Nucleotide cyclase"/>
    <property type="match status" value="1"/>
</dbReference>
<dbReference type="InterPro" id="IPR001054">
    <property type="entry name" value="A/G_cyclase"/>
</dbReference>
<dbReference type="InterPro" id="IPR050697">
    <property type="entry name" value="Adenylyl/Guanylyl_Cyclase_3/4"/>
</dbReference>
<dbReference type="InterPro" id="IPR029787">
    <property type="entry name" value="Nucleotide_cyclase"/>
</dbReference>
<dbReference type="PANTHER" id="PTHR43081:SF1">
    <property type="entry name" value="ADENYLATE CYCLASE, TERMINAL-DIFFERENTIATION SPECIFIC"/>
    <property type="match status" value="1"/>
</dbReference>
<dbReference type="PANTHER" id="PTHR43081">
    <property type="entry name" value="ADENYLATE CYCLASE, TERMINAL-DIFFERENTIATION SPECIFIC-RELATED"/>
    <property type="match status" value="1"/>
</dbReference>
<dbReference type="Pfam" id="PF00211">
    <property type="entry name" value="Guanylate_cyc"/>
    <property type="match status" value="1"/>
</dbReference>
<dbReference type="Pfam" id="PF25493">
    <property type="entry name" value="Peripla_BP_A-cyclase"/>
    <property type="match status" value="1"/>
</dbReference>
<dbReference type="SMART" id="SM00044">
    <property type="entry name" value="CYCc"/>
    <property type="match status" value="1"/>
</dbReference>
<dbReference type="SUPFAM" id="SSF55073">
    <property type="entry name" value="Nucleotide cyclase"/>
    <property type="match status" value="1"/>
</dbReference>
<dbReference type="PROSITE" id="PS50125">
    <property type="entry name" value="GUANYLATE_CYCLASE_2"/>
    <property type="match status" value="1"/>
</dbReference>
<reference key="1">
    <citation type="journal article" date="1991" name="EMBO J.">
        <title>The trypanosome VSG expression site encodes adenylate cyclase and a leucine-rich putative regulatory gene.</title>
        <authorList>
            <person name="Ross D.T."/>
            <person name="Raibaud A."/>
            <person name="Florent I.C."/>
            <person name="Sather S."/>
            <person name="Gross M.K."/>
            <person name="Storm D.R."/>
            <person name="Eisen H."/>
        </authorList>
    </citation>
    <scope>NUCLEOTIDE SEQUENCE [GENOMIC DNA]</scope>
    <source>
        <strain>CL</strain>
    </source>
</reference>
<protein>
    <recommendedName>
        <fullName>Receptor-type adenylate cyclase</fullName>
        <ecNumber>4.6.1.1</ecNumber>
    </recommendedName>
    <alternativeName>
        <fullName>ATP pyrophosphate-lyase</fullName>
    </alternativeName>
    <alternativeName>
        <fullName>Adenylyl cyclase</fullName>
    </alternativeName>
</protein>